<proteinExistence type="inferred from homology"/>
<evidence type="ECO:0000255" key="1">
    <source>
        <dbReference type="HAMAP-Rule" id="MF_00504"/>
    </source>
</evidence>
<organism>
    <name type="scientific">Klebsiella pneumoniae (strain 342)</name>
    <dbReference type="NCBI Taxonomy" id="507522"/>
    <lineage>
        <taxon>Bacteria</taxon>
        <taxon>Pseudomonadati</taxon>
        <taxon>Pseudomonadota</taxon>
        <taxon>Gammaproteobacteria</taxon>
        <taxon>Enterobacterales</taxon>
        <taxon>Enterobacteriaceae</taxon>
        <taxon>Klebsiella/Raoultella group</taxon>
        <taxon>Klebsiella</taxon>
        <taxon>Klebsiella pneumoniae complex</taxon>
    </lineage>
</organism>
<keyword id="KW-0031">Aminopeptidase</keyword>
<keyword id="KW-0963">Cytoplasm</keyword>
<keyword id="KW-0378">Hydrolase</keyword>
<keyword id="KW-0464">Manganese</keyword>
<keyword id="KW-0479">Metal-binding</keyword>
<keyword id="KW-0645">Protease</keyword>
<sequence>MTEAMKITLSTLPADARWGEKATWSINNDGIALHLNGKDDLGLIQRAARKIDGMGIKHVALSGEGWNTDRAWAFWAGYKGPKGQRQVEWPTLDDAQRSELDNRLTIIDWVRDTINAPAEELGPEQLAQRAVDLLCGVAGEKVSYRITKGEDLREQNYLGLHTVGRGSERPPVLLALDYNPTGDKDAPVYACLVGKGITFDSGGYSIKQSAFMDSMKSDMGGAATITGALAFAITRGLNKRVKLYLCCADNLISGNAFKLGDIIHYRNGKTVEVMNTDAEGRLVLADGLIDASAQKPALIIDAATLTGAAKTALGNDYHALFSFDDALANRLLASAQAENEAFWRLPLAEFHRNQLPSNFAELNNTGSAAYPAGASTAAGFLSHFVENYHQGWLHIDCSATYRKSAVEQWSAGATGLGVRTIANLLTAE</sequence>
<accession>B5XNK4</accession>
<feature type="chain" id="PRO_1000127011" description="Peptidase B">
    <location>
        <begin position="1"/>
        <end position="428"/>
    </location>
</feature>
<feature type="active site" evidence="1">
    <location>
        <position position="207"/>
    </location>
</feature>
<feature type="active site" evidence="1">
    <location>
        <position position="281"/>
    </location>
</feature>
<feature type="binding site" evidence="1">
    <location>
        <position position="195"/>
    </location>
    <ligand>
        <name>Mn(2+)</name>
        <dbReference type="ChEBI" id="CHEBI:29035"/>
        <label>2</label>
    </ligand>
</feature>
<feature type="binding site" evidence="1">
    <location>
        <position position="200"/>
    </location>
    <ligand>
        <name>Mn(2+)</name>
        <dbReference type="ChEBI" id="CHEBI:29035"/>
        <label>1</label>
    </ligand>
</feature>
<feature type="binding site" evidence="1">
    <location>
        <position position="200"/>
    </location>
    <ligand>
        <name>Mn(2+)</name>
        <dbReference type="ChEBI" id="CHEBI:29035"/>
        <label>2</label>
    </ligand>
</feature>
<feature type="binding site" evidence="1">
    <location>
        <position position="218"/>
    </location>
    <ligand>
        <name>Mn(2+)</name>
        <dbReference type="ChEBI" id="CHEBI:29035"/>
        <label>2</label>
    </ligand>
</feature>
<feature type="binding site" evidence="1">
    <location>
        <position position="277"/>
    </location>
    <ligand>
        <name>Mn(2+)</name>
        <dbReference type="ChEBI" id="CHEBI:29035"/>
        <label>1</label>
    </ligand>
</feature>
<feature type="binding site" evidence="1">
    <location>
        <position position="279"/>
    </location>
    <ligand>
        <name>Mn(2+)</name>
        <dbReference type="ChEBI" id="CHEBI:29035"/>
        <label>1</label>
    </ligand>
</feature>
<feature type="binding site" evidence="1">
    <location>
        <position position="279"/>
    </location>
    <ligand>
        <name>Mn(2+)</name>
        <dbReference type="ChEBI" id="CHEBI:29035"/>
        <label>2</label>
    </ligand>
</feature>
<dbReference type="EC" id="3.4.11.23" evidence="1"/>
<dbReference type="EMBL" id="CP000964">
    <property type="protein sequence ID" value="ACI06611.1"/>
    <property type="molecule type" value="Genomic_DNA"/>
</dbReference>
<dbReference type="SMR" id="B5XNK4"/>
<dbReference type="MEROPS" id="M17.004"/>
<dbReference type="KEGG" id="kpe:KPK_1264"/>
<dbReference type="HOGENOM" id="CLU_013734_7_1_6"/>
<dbReference type="Proteomes" id="UP000001734">
    <property type="component" value="Chromosome"/>
</dbReference>
<dbReference type="GO" id="GO:0005737">
    <property type="term" value="C:cytoplasm"/>
    <property type="evidence" value="ECO:0007669"/>
    <property type="project" value="UniProtKB-SubCell"/>
</dbReference>
<dbReference type="GO" id="GO:0030145">
    <property type="term" value="F:manganese ion binding"/>
    <property type="evidence" value="ECO:0007669"/>
    <property type="project" value="UniProtKB-UniRule"/>
</dbReference>
<dbReference type="GO" id="GO:0070006">
    <property type="term" value="F:metalloaminopeptidase activity"/>
    <property type="evidence" value="ECO:0007669"/>
    <property type="project" value="InterPro"/>
</dbReference>
<dbReference type="GO" id="GO:0006508">
    <property type="term" value="P:proteolysis"/>
    <property type="evidence" value="ECO:0007669"/>
    <property type="project" value="UniProtKB-UniRule"/>
</dbReference>
<dbReference type="CDD" id="cd00433">
    <property type="entry name" value="Peptidase_M17"/>
    <property type="match status" value="1"/>
</dbReference>
<dbReference type="FunFam" id="3.40.630.10:FF:000037">
    <property type="entry name" value="Peptidase B"/>
    <property type="match status" value="1"/>
</dbReference>
<dbReference type="Gene3D" id="3.40.630.10">
    <property type="entry name" value="Zn peptidases"/>
    <property type="match status" value="1"/>
</dbReference>
<dbReference type="HAMAP" id="MF_00504">
    <property type="entry name" value="Aminopeptidase_M17"/>
    <property type="match status" value="1"/>
</dbReference>
<dbReference type="InterPro" id="IPR011356">
    <property type="entry name" value="Leucine_aapep/pepB"/>
</dbReference>
<dbReference type="InterPro" id="IPR047620">
    <property type="entry name" value="M17_PepB-like_N"/>
</dbReference>
<dbReference type="InterPro" id="IPR008330">
    <property type="entry name" value="Pept_M17_PepB"/>
</dbReference>
<dbReference type="InterPro" id="IPR000819">
    <property type="entry name" value="Peptidase_M17_C"/>
</dbReference>
<dbReference type="NCBIfam" id="NF003450">
    <property type="entry name" value="PRK05015.1"/>
    <property type="match status" value="1"/>
</dbReference>
<dbReference type="PANTHER" id="PTHR11963">
    <property type="entry name" value="LEUCINE AMINOPEPTIDASE-RELATED"/>
    <property type="match status" value="1"/>
</dbReference>
<dbReference type="PANTHER" id="PTHR11963:SF20">
    <property type="entry name" value="PEPTIDASE B"/>
    <property type="match status" value="1"/>
</dbReference>
<dbReference type="Pfam" id="PF12404">
    <property type="entry name" value="DUF3663"/>
    <property type="match status" value="1"/>
</dbReference>
<dbReference type="Pfam" id="PF00883">
    <property type="entry name" value="Peptidase_M17"/>
    <property type="match status" value="1"/>
</dbReference>
<dbReference type="PIRSF" id="PIRSF036388">
    <property type="entry name" value="Ctsl_amnpptdse_B"/>
    <property type="match status" value="1"/>
</dbReference>
<dbReference type="PRINTS" id="PR00481">
    <property type="entry name" value="LAMNOPPTDASE"/>
</dbReference>
<dbReference type="SUPFAM" id="SSF53187">
    <property type="entry name" value="Zn-dependent exopeptidases"/>
    <property type="match status" value="1"/>
</dbReference>
<dbReference type="PROSITE" id="PS00631">
    <property type="entry name" value="CYTOSOL_AP"/>
    <property type="match status" value="1"/>
</dbReference>
<comment type="function">
    <text evidence="1">Probably plays an important role in intracellular peptide degradation.</text>
</comment>
<comment type="catalytic activity">
    <reaction evidence="1">
        <text>Release of an N-terminal amino acid, Xaa, from a peptide or arylamide. Xaa is preferably Glu or Asp but may be other amino acids, including Leu, Met, His, Cys and Gln.</text>
        <dbReference type="EC" id="3.4.11.23"/>
    </reaction>
</comment>
<comment type="cofactor">
    <cofactor evidence="1">
        <name>Mn(2+)</name>
        <dbReference type="ChEBI" id="CHEBI:29035"/>
    </cofactor>
    <text evidence="1">Binds 2 manganese ions per subunit.</text>
</comment>
<comment type="subunit">
    <text evidence="1">Homohexamer.</text>
</comment>
<comment type="subcellular location">
    <subcellularLocation>
        <location evidence="1">Cytoplasm</location>
    </subcellularLocation>
</comment>
<comment type="similarity">
    <text evidence="1">Belongs to the peptidase M17 family.</text>
</comment>
<gene>
    <name evidence="1" type="primary">pepB</name>
    <name type="ordered locus">KPK_1264</name>
</gene>
<name>PEPB_KLEP3</name>
<protein>
    <recommendedName>
        <fullName evidence="1">Peptidase B</fullName>
        <ecNumber evidence="1">3.4.11.23</ecNumber>
    </recommendedName>
    <alternativeName>
        <fullName evidence="1">Aminopeptidase B</fullName>
    </alternativeName>
</protein>
<reference key="1">
    <citation type="journal article" date="2008" name="PLoS Genet.">
        <title>Complete genome sequence of the N2-fixing broad host range endophyte Klebsiella pneumoniae 342 and virulence predictions verified in mice.</title>
        <authorList>
            <person name="Fouts D.E."/>
            <person name="Tyler H.L."/>
            <person name="DeBoy R.T."/>
            <person name="Daugherty S."/>
            <person name="Ren Q."/>
            <person name="Badger J.H."/>
            <person name="Durkin A.S."/>
            <person name="Huot H."/>
            <person name="Shrivastava S."/>
            <person name="Kothari S."/>
            <person name="Dodson R.J."/>
            <person name="Mohamoud Y."/>
            <person name="Khouri H."/>
            <person name="Roesch L.F.W."/>
            <person name="Krogfelt K.A."/>
            <person name="Struve C."/>
            <person name="Triplett E.W."/>
            <person name="Methe B.A."/>
        </authorList>
    </citation>
    <scope>NUCLEOTIDE SEQUENCE [LARGE SCALE GENOMIC DNA]</scope>
    <source>
        <strain>342</strain>
    </source>
</reference>